<dbReference type="EC" id="2.7.1.71" evidence="1"/>
<dbReference type="EMBL" id="CP001127">
    <property type="protein sequence ID" value="ACF92898.1"/>
    <property type="molecule type" value="Genomic_DNA"/>
</dbReference>
<dbReference type="RefSeq" id="WP_000818621.1">
    <property type="nucleotide sequence ID" value="NC_011094.1"/>
</dbReference>
<dbReference type="SMR" id="B4TY47"/>
<dbReference type="GeneID" id="66757820"/>
<dbReference type="KEGG" id="sew:SeSA_A3684"/>
<dbReference type="HOGENOM" id="CLU_057607_2_2_6"/>
<dbReference type="UniPathway" id="UPA00053">
    <property type="reaction ID" value="UER00088"/>
</dbReference>
<dbReference type="Proteomes" id="UP000001865">
    <property type="component" value="Chromosome"/>
</dbReference>
<dbReference type="GO" id="GO:0005829">
    <property type="term" value="C:cytosol"/>
    <property type="evidence" value="ECO:0007669"/>
    <property type="project" value="TreeGrafter"/>
</dbReference>
<dbReference type="GO" id="GO:0005524">
    <property type="term" value="F:ATP binding"/>
    <property type="evidence" value="ECO:0007669"/>
    <property type="project" value="UniProtKB-UniRule"/>
</dbReference>
<dbReference type="GO" id="GO:0000287">
    <property type="term" value="F:magnesium ion binding"/>
    <property type="evidence" value="ECO:0007669"/>
    <property type="project" value="UniProtKB-UniRule"/>
</dbReference>
<dbReference type="GO" id="GO:0004765">
    <property type="term" value="F:shikimate kinase activity"/>
    <property type="evidence" value="ECO:0007669"/>
    <property type="project" value="UniProtKB-UniRule"/>
</dbReference>
<dbReference type="GO" id="GO:0008652">
    <property type="term" value="P:amino acid biosynthetic process"/>
    <property type="evidence" value="ECO:0007669"/>
    <property type="project" value="UniProtKB-KW"/>
</dbReference>
<dbReference type="GO" id="GO:0009073">
    <property type="term" value="P:aromatic amino acid family biosynthetic process"/>
    <property type="evidence" value="ECO:0007669"/>
    <property type="project" value="UniProtKB-KW"/>
</dbReference>
<dbReference type="GO" id="GO:0009423">
    <property type="term" value="P:chorismate biosynthetic process"/>
    <property type="evidence" value="ECO:0007669"/>
    <property type="project" value="UniProtKB-UniRule"/>
</dbReference>
<dbReference type="CDD" id="cd00464">
    <property type="entry name" value="SK"/>
    <property type="match status" value="1"/>
</dbReference>
<dbReference type="FunFam" id="3.40.50.300:FF:000099">
    <property type="entry name" value="Shikimate kinase 1"/>
    <property type="match status" value="1"/>
</dbReference>
<dbReference type="Gene3D" id="3.40.50.300">
    <property type="entry name" value="P-loop containing nucleotide triphosphate hydrolases"/>
    <property type="match status" value="1"/>
</dbReference>
<dbReference type="HAMAP" id="MF_00109">
    <property type="entry name" value="Shikimate_kinase"/>
    <property type="match status" value="1"/>
</dbReference>
<dbReference type="InterPro" id="IPR027417">
    <property type="entry name" value="P-loop_NTPase"/>
</dbReference>
<dbReference type="InterPro" id="IPR031322">
    <property type="entry name" value="Shikimate/glucono_kinase"/>
</dbReference>
<dbReference type="InterPro" id="IPR000623">
    <property type="entry name" value="Shikimate_kinase/TSH1"/>
</dbReference>
<dbReference type="InterPro" id="IPR023000">
    <property type="entry name" value="Shikimate_kinase_CS"/>
</dbReference>
<dbReference type="NCBIfam" id="NF003456">
    <property type="entry name" value="PRK05057.1"/>
    <property type="match status" value="1"/>
</dbReference>
<dbReference type="PANTHER" id="PTHR21087">
    <property type="entry name" value="SHIKIMATE KINASE"/>
    <property type="match status" value="1"/>
</dbReference>
<dbReference type="PANTHER" id="PTHR21087:SF16">
    <property type="entry name" value="SHIKIMATE KINASE 1, CHLOROPLASTIC"/>
    <property type="match status" value="1"/>
</dbReference>
<dbReference type="Pfam" id="PF01202">
    <property type="entry name" value="SKI"/>
    <property type="match status" value="1"/>
</dbReference>
<dbReference type="PRINTS" id="PR01100">
    <property type="entry name" value="SHIKIMTKNASE"/>
</dbReference>
<dbReference type="SUPFAM" id="SSF52540">
    <property type="entry name" value="P-loop containing nucleoside triphosphate hydrolases"/>
    <property type="match status" value="1"/>
</dbReference>
<dbReference type="PROSITE" id="PS01128">
    <property type="entry name" value="SHIKIMATE_KINASE"/>
    <property type="match status" value="1"/>
</dbReference>
<organism>
    <name type="scientific">Salmonella schwarzengrund (strain CVM19633)</name>
    <dbReference type="NCBI Taxonomy" id="439843"/>
    <lineage>
        <taxon>Bacteria</taxon>
        <taxon>Pseudomonadati</taxon>
        <taxon>Pseudomonadota</taxon>
        <taxon>Gammaproteobacteria</taxon>
        <taxon>Enterobacterales</taxon>
        <taxon>Enterobacteriaceae</taxon>
        <taxon>Salmonella</taxon>
    </lineage>
</organism>
<accession>B4TY47</accession>
<comment type="function">
    <text evidence="1">Catalyzes the specific phosphorylation of the 3-hydroxyl group of shikimic acid using ATP as a cosubstrate.</text>
</comment>
<comment type="catalytic activity">
    <reaction evidence="1">
        <text>shikimate + ATP = 3-phosphoshikimate + ADP + H(+)</text>
        <dbReference type="Rhea" id="RHEA:13121"/>
        <dbReference type="ChEBI" id="CHEBI:15378"/>
        <dbReference type="ChEBI" id="CHEBI:30616"/>
        <dbReference type="ChEBI" id="CHEBI:36208"/>
        <dbReference type="ChEBI" id="CHEBI:145989"/>
        <dbReference type="ChEBI" id="CHEBI:456216"/>
        <dbReference type="EC" id="2.7.1.71"/>
    </reaction>
</comment>
<comment type="cofactor">
    <cofactor evidence="1">
        <name>Mg(2+)</name>
        <dbReference type="ChEBI" id="CHEBI:18420"/>
    </cofactor>
    <text evidence="1">Binds 1 Mg(2+) ion per subunit.</text>
</comment>
<comment type="pathway">
    <text evidence="1">Metabolic intermediate biosynthesis; chorismate biosynthesis; chorismate from D-erythrose 4-phosphate and phosphoenolpyruvate: step 5/7.</text>
</comment>
<comment type="subunit">
    <text evidence="1">Monomer.</text>
</comment>
<comment type="subcellular location">
    <subcellularLocation>
        <location evidence="1">Cytoplasm</location>
    </subcellularLocation>
</comment>
<comment type="similarity">
    <text evidence="1">Belongs to the shikimate kinase family.</text>
</comment>
<protein>
    <recommendedName>
        <fullName evidence="1">Shikimate kinase 1</fullName>
        <shortName evidence="1">SK 1</shortName>
        <ecNumber evidence="1">2.7.1.71</ecNumber>
    </recommendedName>
</protein>
<reference key="1">
    <citation type="journal article" date="2011" name="J. Bacteriol.">
        <title>Comparative genomics of 28 Salmonella enterica isolates: evidence for CRISPR-mediated adaptive sublineage evolution.</title>
        <authorList>
            <person name="Fricke W.F."/>
            <person name="Mammel M.K."/>
            <person name="McDermott P.F."/>
            <person name="Tartera C."/>
            <person name="White D.G."/>
            <person name="Leclerc J.E."/>
            <person name="Ravel J."/>
            <person name="Cebula T.A."/>
        </authorList>
    </citation>
    <scope>NUCLEOTIDE SEQUENCE [LARGE SCALE GENOMIC DNA]</scope>
    <source>
        <strain>CVM19633</strain>
    </source>
</reference>
<evidence type="ECO:0000255" key="1">
    <source>
        <dbReference type="HAMAP-Rule" id="MF_00109"/>
    </source>
</evidence>
<name>AROK_SALSV</name>
<proteinExistence type="inferred from homology"/>
<gene>
    <name evidence="1" type="primary">aroK</name>
    <name type="ordered locus">SeSA_A3684</name>
</gene>
<keyword id="KW-0028">Amino-acid biosynthesis</keyword>
<keyword id="KW-0057">Aromatic amino acid biosynthesis</keyword>
<keyword id="KW-0067">ATP-binding</keyword>
<keyword id="KW-0963">Cytoplasm</keyword>
<keyword id="KW-0418">Kinase</keyword>
<keyword id="KW-0460">Magnesium</keyword>
<keyword id="KW-0479">Metal-binding</keyword>
<keyword id="KW-0547">Nucleotide-binding</keyword>
<keyword id="KW-0808">Transferase</keyword>
<sequence>MAEKRNIFLVGPMGAGKSTIGRQLAQQLNMEFYDSDQEIEKRTGADVGWVFDVEGEDGFRNREEKVINELTEKQGIVLATGGGSVKSRETRNRLSARGVVVYLETTIEKQLARTQRDKKRPLLQVEAPPREVLEALANERNPLYEEIADVTIRTDDQSAKVVANQIIHMLESN</sequence>
<feature type="chain" id="PRO_1000094411" description="Shikimate kinase 1">
    <location>
        <begin position="1"/>
        <end position="173"/>
    </location>
</feature>
<feature type="binding site" evidence="1">
    <location>
        <begin position="14"/>
        <end position="19"/>
    </location>
    <ligand>
        <name>ATP</name>
        <dbReference type="ChEBI" id="CHEBI:30616"/>
    </ligand>
</feature>
<feature type="binding site" evidence="1">
    <location>
        <position position="18"/>
    </location>
    <ligand>
        <name>Mg(2+)</name>
        <dbReference type="ChEBI" id="CHEBI:18420"/>
    </ligand>
</feature>
<feature type="binding site" evidence="1">
    <location>
        <position position="36"/>
    </location>
    <ligand>
        <name>substrate</name>
    </ligand>
</feature>
<feature type="binding site" evidence="1">
    <location>
        <position position="60"/>
    </location>
    <ligand>
        <name>substrate</name>
    </ligand>
</feature>
<feature type="binding site" evidence="1">
    <location>
        <position position="82"/>
    </location>
    <ligand>
        <name>substrate</name>
    </ligand>
</feature>
<feature type="binding site" evidence="1">
    <location>
        <position position="120"/>
    </location>
    <ligand>
        <name>ATP</name>
        <dbReference type="ChEBI" id="CHEBI:30616"/>
    </ligand>
</feature>
<feature type="binding site" evidence="1">
    <location>
        <position position="140"/>
    </location>
    <ligand>
        <name>substrate</name>
    </ligand>
</feature>
<feature type="binding site" evidence="1">
    <location>
        <position position="157"/>
    </location>
    <ligand>
        <name>ATP</name>
        <dbReference type="ChEBI" id="CHEBI:30616"/>
    </ligand>
</feature>